<name>GLSA_SALAR</name>
<comment type="catalytic activity">
    <reaction evidence="1">
        <text>L-glutamine + H2O = L-glutamate + NH4(+)</text>
        <dbReference type="Rhea" id="RHEA:15889"/>
        <dbReference type="ChEBI" id="CHEBI:15377"/>
        <dbReference type="ChEBI" id="CHEBI:28938"/>
        <dbReference type="ChEBI" id="CHEBI:29985"/>
        <dbReference type="ChEBI" id="CHEBI:58359"/>
        <dbReference type="EC" id="3.5.1.2"/>
    </reaction>
</comment>
<comment type="subunit">
    <text evidence="1">Homotetramer.</text>
</comment>
<comment type="similarity">
    <text evidence="1">Belongs to the glutaminase family.</text>
</comment>
<comment type="sequence caution" evidence="2">
    <conflict type="erroneous initiation">
        <sequence resource="EMBL-CDS" id="ABX21358"/>
    </conflict>
</comment>
<dbReference type="EC" id="3.5.1.2" evidence="1"/>
<dbReference type="EMBL" id="CP000880">
    <property type="protein sequence ID" value="ABX21358.1"/>
    <property type="status" value="ALT_INIT"/>
    <property type="molecule type" value="Genomic_DNA"/>
</dbReference>
<dbReference type="SMR" id="A9MRQ5"/>
<dbReference type="STRING" id="41514.SARI_01462"/>
<dbReference type="KEGG" id="ses:SARI_01462"/>
<dbReference type="HOGENOM" id="CLU_027932_1_1_6"/>
<dbReference type="Proteomes" id="UP000002084">
    <property type="component" value="Chromosome"/>
</dbReference>
<dbReference type="GO" id="GO:0004359">
    <property type="term" value="F:glutaminase activity"/>
    <property type="evidence" value="ECO:0007669"/>
    <property type="project" value="UniProtKB-UniRule"/>
</dbReference>
<dbReference type="GO" id="GO:0006537">
    <property type="term" value="P:glutamate biosynthetic process"/>
    <property type="evidence" value="ECO:0007669"/>
    <property type="project" value="TreeGrafter"/>
</dbReference>
<dbReference type="GO" id="GO:0006543">
    <property type="term" value="P:glutamine catabolic process"/>
    <property type="evidence" value="ECO:0007669"/>
    <property type="project" value="TreeGrafter"/>
</dbReference>
<dbReference type="FunFam" id="3.40.710.10:FF:000005">
    <property type="entry name" value="Glutaminase"/>
    <property type="match status" value="1"/>
</dbReference>
<dbReference type="Gene3D" id="3.40.710.10">
    <property type="entry name" value="DD-peptidase/beta-lactamase superfamily"/>
    <property type="match status" value="1"/>
</dbReference>
<dbReference type="HAMAP" id="MF_00313">
    <property type="entry name" value="Glutaminase"/>
    <property type="match status" value="1"/>
</dbReference>
<dbReference type="InterPro" id="IPR012338">
    <property type="entry name" value="Beta-lactam/transpept-like"/>
</dbReference>
<dbReference type="InterPro" id="IPR015868">
    <property type="entry name" value="Glutaminase"/>
</dbReference>
<dbReference type="NCBIfam" id="TIGR03814">
    <property type="entry name" value="Gln_ase"/>
    <property type="match status" value="1"/>
</dbReference>
<dbReference type="NCBIfam" id="NF002132">
    <property type="entry name" value="PRK00971.1-1"/>
    <property type="match status" value="1"/>
</dbReference>
<dbReference type="NCBIfam" id="NF002133">
    <property type="entry name" value="PRK00971.1-2"/>
    <property type="match status" value="1"/>
</dbReference>
<dbReference type="PANTHER" id="PTHR12544">
    <property type="entry name" value="GLUTAMINASE"/>
    <property type="match status" value="1"/>
</dbReference>
<dbReference type="PANTHER" id="PTHR12544:SF29">
    <property type="entry name" value="GLUTAMINASE"/>
    <property type="match status" value="1"/>
</dbReference>
<dbReference type="Pfam" id="PF04960">
    <property type="entry name" value="Glutaminase"/>
    <property type="match status" value="1"/>
</dbReference>
<dbReference type="SUPFAM" id="SSF56601">
    <property type="entry name" value="beta-lactamase/transpeptidase-like"/>
    <property type="match status" value="1"/>
</dbReference>
<accession>A9MRQ5</accession>
<feature type="chain" id="PRO_0000336039" description="Glutaminase">
    <location>
        <begin position="1"/>
        <end position="308"/>
    </location>
</feature>
<feature type="binding site" evidence="1">
    <location>
        <position position="66"/>
    </location>
    <ligand>
        <name>substrate</name>
    </ligand>
</feature>
<feature type="binding site" evidence="1">
    <location>
        <position position="117"/>
    </location>
    <ligand>
        <name>substrate</name>
    </ligand>
</feature>
<feature type="binding site" evidence="1">
    <location>
        <position position="161"/>
    </location>
    <ligand>
        <name>substrate</name>
    </ligand>
</feature>
<feature type="binding site" evidence="1">
    <location>
        <position position="168"/>
    </location>
    <ligand>
        <name>substrate</name>
    </ligand>
</feature>
<feature type="binding site" evidence="1">
    <location>
        <position position="192"/>
    </location>
    <ligand>
        <name>substrate</name>
    </ligand>
</feature>
<feature type="binding site" evidence="1">
    <location>
        <position position="244"/>
    </location>
    <ligand>
        <name>substrate</name>
    </ligand>
</feature>
<feature type="binding site" evidence="1">
    <location>
        <position position="262"/>
    </location>
    <ligand>
        <name>substrate</name>
    </ligand>
</feature>
<evidence type="ECO:0000255" key="1">
    <source>
        <dbReference type="HAMAP-Rule" id="MF_00313"/>
    </source>
</evidence>
<evidence type="ECO:0000305" key="2"/>
<keyword id="KW-0378">Hydrolase</keyword>
<keyword id="KW-1185">Reference proteome</keyword>
<protein>
    <recommendedName>
        <fullName evidence="1">Glutaminase</fullName>
        <ecNumber evidence="1">3.5.1.2</ecNumber>
    </recommendedName>
</protein>
<proteinExistence type="inferred from homology"/>
<reference key="1">
    <citation type="submission" date="2007-11" db="EMBL/GenBank/DDBJ databases">
        <authorList>
            <consortium name="The Salmonella enterica serovar Arizonae Genome Sequencing Project"/>
            <person name="McClelland M."/>
            <person name="Sanderson E.K."/>
            <person name="Porwollik S."/>
            <person name="Spieth J."/>
            <person name="Clifton W.S."/>
            <person name="Fulton R."/>
            <person name="Chunyan W."/>
            <person name="Wollam A."/>
            <person name="Shah N."/>
            <person name="Pepin K."/>
            <person name="Bhonagiri V."/>
            <person name="Nash W."/>
            <person name="Johnson M."/>
            <person name="Thiruvilangam P."/>
            <person name="Wilson R."/>
        </authorList>
    </citation>
    <scope>NUCLEOTIDE SEQUENCE [LARGE SCALE GENOMIC DNA]</scope>
    <source>
        <strain>ATCC BAA-731 / CDC346-86 / RSK2980</strain>
    </source>
</reference>
<gene>
    <name evidence="1" type="primary">glsA</name>
    <name type="ordered locus">SARI_01462</name>
</gene>
<sequence>MARAMDNAILETILQRVRPLIGQGKVADYIPALASVEGSKLGIAICTVDGQHYQAGDAHERFSIQSISKVLSLVVAMRHYPEEEIWQRVGKDPSGSPFNSLVQLEMEQGIPRNPFINAGALVVCDMLQGRLSAPRQRMLEVVRALCGVSDITYDATVARSEFEHSARNAAIAWLMKSFGNFHHDVPTVLQNYFHYCALKMSCMELARTFVFLANQGEAFHLDEPVVTPMQARQINALMATNGMYQNAGEFAWRVGLPAKSGVGGGIVAIVPHEMAIAVWSPELDPAGNSLAGIAALEQLTQTLGRSVY</sequence>
<organism>
    <name type="scientific">Salmonella arizonae (strain ATCC BAA-731 / CDC346-86 / RSK2980)</name>
    <dbReference type="NCBI Taxonomy" id="41514"/>
    <lineage>
        <taxon>Bacteria</taxon>
        <taxon>Pseudomonadati</taxon>
        <taxon>Pseudomonadota</taxon>
        <taxon>Gammaproteobacteria</taxon>
        <taxon>Enterobacterales</taxon>
        <taxon>Enterobacteriaceae</taxon>
        <taxon>Salmonella</taxon>
    </lineage>
</organism>